<dbReference type="EC" id="3.1.11.6" evidence="1"/>
<dbReference type="EMBL" id="CP000726">
    <property type="protein sequence ID" value="ABS35446.1"/>
    <property type="molecule type" value="Genomic_DNA"/>
</dbReference>
<dbReference type="RefSeq" id="WP_003358983.1">
    <property type="nucleotide sequence ID" value="NC_009697.1"/>
</dbReference>
<dbReference type="SMR" id="A7FUU0"/>
<dbReference type="GeneID" id="5186140"/>
<dbReference type="KEGG" id="cba:CLB_1822"/>
<dbReference type="HOGENOM" id="CLU_023625_2_0_9"/>
<dbReference type="GO" id="GO:0005737">
    <property type="term" value="C:cytoplasm"/>
    <property type="evidence" value="ECO:0007669"/>
    <property type="project" value="UniProtKB-SubCell"/>
</dbReference>
<dbReference type="GO" id="GO:0009318">
    <property type="term" value="C:exodeoxyribonuclease VII complex"/>
    <property type="evidence" value="ECO:0007669"/>
    <property type="project" value="InterPro"/>
</dbReference>
<dbReference type="GO" id="GO:0008855">
    <property type="term" value="F:exodeoxyribonuclease VII activity"/>
    <property type="evidence" value="ECO:0007669"/>
    <property type="project" value="UniProtKB-UniRule"/>
</dbReference>
<dbReference type="GO" id="GO:0003676">
    <property type="term" value="F:nucleic acid binding"/>
    <property type="evidence" value="ECO:0007669"/>
    <property type="project" value="InterPro"/>
</dbReference>
<dbReference type="GO" id="GO:0006308">
    <property type="term" value="P:DNA catabolic process"/>
    <property type="evidence" value="ECO:0007669"/>
    <property type="project" value="UniProtKB-UniRule"/>
</dbReference>
<dbReference type="CDD" id="cd04489">
    <property type="entry name" value="ExoVII_LU_OBF"/>
    <property type="match status" value="1"/>
</dbReference>
<dbReference type="HAMAP" id="MF_00378">
    <property type="entry name" value="Exonuc_7_L"/>
    <property type="match status" value="1"/>
</dbReference>
<dbReference type="InterPro" id="IPR003753">
    <property type="entry name" value="Exonuc_VII_L"/>
</dbReference>
<dbReference type="InterPro" id="IPR020579">
    <property type="entry name" value="Exonuc_VII_lsu_C"/>
</dbReference>
<dbReference type="InterPro" id="IPR025824">
    <property type="entry name" value="OB-fold_nuc-bd_dom"/>
</dbReference>
<dbReference type="NCBIfam" id="TIGR00237">
    <property type="entry name" value="xseA"/>
    <property type="match status" value="1"/>
</dbReference>
<dbReference type="PANTHER" id="PTHR30008">
    <property type="entry name" value="EXODEOXYRIBONUCLEASE 7 LARGE SUBUNIT"/>
    <property type="match status" value="1"/>
</dbReference>
<dbReference type="PANTHER" id="PTHR30008:SF0">
    <property type="entry name" value="EXODEOXYRIBONUCLEASE 7 LARGE SUBUNIT"/>
    <property type="match status" value="1"/>
</dbReference>
<dbReference type="Pfam" id="PF02601">
    <property type="entry name" value="Exonuc_VII_L"/>
    <property type="match status" value="2"/>
</dbReference>
<dbReference type="Pfam" id="PF13742">
    <property type="entry name" value="tRNA_anti_2"/>
    <property type="match status" value="1"/>
</dbReference>
<sequence>MHIKTLTVSQLNRYVKNTLDADFILNNASVKGEISNLKIHSSGHIYFSLKDGGSKINCVMFKSYAYNLKFAPENGMDVVALGNVSVYEKEGSYQLYVKDMKREGIGDLYVAFEKLKEKLKEEGLFDDVHKKEIPKFSKKVGVITSPTGAALKDIINVTKRRNKGIELLIYPALVQGTDASRTLIEGIKILNKVEDVDIIILARGGGSIEELWAFNNEELAYAVYNSKKPIITGVGHETDFTIVDFVSDRRAPTPSAAAEIAVFDREVLINEILNYKYNIKNYMENIIKEKRNYLNLYKQKIEANSPTNIIVNEYKNIDNLKELLNMKIEGKLNKEKNNLSRLSSLLEAHNPLNVLKKGYTLIEDEGNNLITEKEALKELNKINIIFKDGRAKLSIEYIEEF</sequence>
<feature type="chain" id="PRO_1000048768" description="Exodeoxyribonuclease 7 large subunit">
    <location>
        <begin position="1"/>
        <end position="401"/>
    </location>
</feature>
<reference key="1">
    <citation type="journal article" date="2007" name="PLoS ONE">
        <title>Analysis of the neurotoxin complex genes in Clostridium botulinum A1-A4 and B1 strains: BoNT/A3, /Ba4 and /B1 clusters are located within plasmids.</title>
        <authorList>
            <person name="Smith T.J."/>
            <person name="Hill K.K."/>
            <person name="Foley B.T."/>
            <person name="Detter J.C."/>
            <person name="Munk A.C."/>
            <person name="Bruce D.C."/>
            <person name="Doggett N.A."/>
            <person name="Smith L.A."/>
            <person name="Marks J.D."/>
            <person name="Xie G."/>
            <person name="Brettin T.S."/>
        </authorList>
    </citation>
    <scope>NUCLEOTIDE SEQUENCE [LARGE SCALE GENOMIC DNA]</scope>
    <source>
        <strain>ATCC 19397 / Type A</strain>
    </source>
</reference>
<accession>A7FUU0</accession>
<organism>
    <name type="scientific">Clostridium botulinum (strain ATCC 19397 / Type A)</name>
    <dbReference type="NCBI Taxonomy" id="441770"/>
    <lineage>
        <taxon>Bacteria</taxon>
        <taxon>Bacillati</taxon>
        <taxon>Bacillota</taxon>
        <taxon>Clostridia</taxon>
        <taxon>Eubacteriales</taxon>
        <taxon>Clostridiaceae</taxon>
        <taxon>Clostridium</taxon>
    </lineage>
</organism>
<gene>
    <name evidence="1" type="primary">xseA</name>
    <name type="ordered locus">CLB_1822</name>
</gene>
<protein>
    <recommendedName>
        <fullName evidence="1">Exodeoxyribonuclease 7 large subunit</fullName>
        <ecNumber evidence="1">3.1.11.6</ecNumber>
    </recommendedName>
    <alternativeName>
        <fullName evidence="1">Exodeoxyribonuclease VII large subunit</fullName>
        <shortName evidence="1">Exonuclease VII large subunit</shortName>
    </alternativeName>
</protein>
<evidence type="ECO:0000255" key="1">
    <source>
        <dbReference type="HAMAP-Rule" id="MF_00378"/>
    </source>
</evidence>
<comment type="function">
    <text evidence="1">Bidirectionally degrades single-stranded DNA into large acid-insoluble oligonucleotides, which are then degraded further into small acid-soluble oligonucleotides.</text>
</comment>
<comment type="catalytic activity">
    <reaction evidence="1">
        <text>Exonucleolytic cleavage in either 5'- to 3'- or 3'- to 5'-direction to yield nucleoside 5'-phosphates.</text>
        <dbReference type="EC" id="3.1.11.6"/>
    </reaction>
</comment>
<comment type="subunit">
    <text evidence="1">Heterooligomer composed of large and small subunits.</text>
</comment>
<comment type="subcellular location">
    <subcellularLocation>
        <location evidence="1">Cytoplasm</location>
    </subcellularLocation>
</comment>
<comment type="similarity">
    <text evidence="1">Belongs to the XseA family.</text>
</comment>
<proteinExistence type="inferred from homology"/>
<name>EX7L_CLOB1</name>
<keyword id="KW-0963">Cytoplasm</keyword>
<keyword id="KW-0269">Exonuclease</keyword>
<keyword id="KW-0378">Hydrolase</keyword>
<keyword id="KW-0540">Nuclease</keyword>